<accession>P44112</accession>
<organism>
    <name type="scientific">Haemophilus influenzae (strain ATCC 51907 / DSM 11121 / KW20 / Rd)</name>
    <dbReference type="NCBI Taxonomy" id="71421"/>
    <lineage>
        <taxon>Bacteria</taxon>
        <taxon>Pseudomonadati</taxon>
        <taxon>Pseudomonadota</taxon>
        <taxon>Gammaproteobacteria</taxon>
        <taxon>Pasteurellales</taxon>
        <taxon>Pasteurellaceae</taxon>
        <taxon>Haemophilus</taxon>
    </lineage>
</organism>
<feature type="chain" id="PRO_0000078003" description="Uncharacterized protein HI_1099">
    <location>
        <begin position="1"/>
        <end position="102"/>
    </location>
</feature>
<feature type="transmembrane region" description="Helical" evidence="1">
    <location>
        <begin position="7"/>
        <end position="23"/>
    </location>
</feature>
<name>Y1099_HAEIN</name>
<keyword id="KW-0472">Membrane</keyword>
<keyword id="KW-1185">Reference proteome</keyword>
<keyword id="KW-0812">Transmembrane</keyword>
<keyword id="KW-1133">Transmembrane helix</keyword>
<comment type="subcellular location">
    <subcellularLocation>
        <location evidence="2">Membrane</location>
        <topology evidence="2">Single-pass membrane protein</topology>
    </subcellularLocation>
</comment>
<proteinExistence type="predicted"/>
<reference key="1">
    <citation type="journal article" date="1995" name="Science">
        <title>Whole-genome random sequencing and assembly of Haemophilus influenzae Rd.</title>
        <authorList>
            <person name="Fleischmann R.D."/>
            <person name="Adams M.D."/>
            <person name="White O."/>
            <person name="Clayton R.A."/>
            <person name="Kirkness E.F."/>
            <person name="Kerlavage A.R."/>
            <person name="Bult C.J."/>
            <person name="Tomb J.-F."/>
            <person name="Dougherty B.A."/>
            <person name="Merrick J.M."/>
            <person name="McKenney K."/>
            <person name="Sutton G.G."/>
            <person name="FitzHugh W."/>
            <person name="Fields C.A."/>
            <person name="Gocayne J.D."/>
            <person name="Scott J.D."/>
            <person name="Shirley R."/>
            <person name="Liu L.-I."/>
            <person name="Glodek A."/>
            <person name="Kelley J.M."/>
            <person name="Weidman J.F."/>
            <person name="Phillips C.A."/>
            <person name="Spriggs T."/>
            <person name="Hedblom E."/>
            <person name="Cotton M.D."/>
            <person name="Utterback T.R."/>
            <person name="Hanna M.C."/>
            <person name="Nguyen D.T."/>
            <person name="Saudek D.M."/>
            <person name="Brandon R.C."/>
            <person name="Fine L.D."/>
            <person name="Fritchman J.L."/>
            <person name="Fuhrmann J.L."/>
            <person name="Geoghagen N.S.M."/>
            <person name="Gnehm C.L."/>
            <person name="McDonald L.A."/>
            <person name="Small K.V."/>
            <person name="Fraser C.M."/>
            <person name="Smith H.O."/>
            <person name="Venter J.C."/>
        </authorList>
    </citation>
    <scope>NUCLEOTIDE SEQUENCE [LARGE SCALE GENOMIC DNA]</scope>
    <source>
        <strain>ATCC 51907 / DSM 11121 / KW20 / Rd</strain>
    </source>
</reference>
<sequence>MYLMRKIVFVSCVILGLAACSSQPEQIGGGVYDMKTVQEYNARVISGNTVTQTQKDKITQQIDTSLKLNQSDNKVKTRTRRVLPVLPVTPSVGYHYNYHYFR</sequence>
<protein>
    <recommendedName>
        <fullName>Uncharacterized protein HI_1099</fullName>
    </recommendedName>
</protein>
<evidence type="ECO:0000255" key="1"/>
<evidence type="ECO:0000305" key="2"/>
<gene>
    <name type="ordered locus">HI_1099</name>
</gene>
<dbReference type="EMBL" id="L42023">
    <property type="protein sequence ID" value="AAC22755.1"/>
    <property type="molecule type" value="Genomic_DNA"/>
</dbReference>
<dbReference type="PIR" id="D64020">
    <property type="entry name" value="D64020"/>
</dbReference>
<dbReference type="RefSeq" id="NP_439256.1">
    <property type="nucleotide sequence ID" value="NC_000907.1"/>
</dbReference>
<dbReference type="EnsemblBacteria" id="AAC22755">
    <property type="protein sequence ID" value="AAC22755"/>
    <property type="gene ID" value="HI_1099"/>
</dbReference>
<dbReference type="KEGG" id="hin:HI_1099"/>
<dbReference type="PATRIC" id="fig|71421.8.peg.1145"/>
<dbReference type="HOGENOM" id="CLU_180761_1_0_6"/>
<dbReference type="OrthoDB" id="5689385at2"/>
<dbReference type="BioCyc" id="HINF71421:G1GJ1-1134-MONOMER"/>
<dbReference type="Proteomes" id="UP000000579">
    <property type="component" value="Chromosome"/>
</dbReference>
<dbReference type="GO" id="GO:0016020">
    <property type="term" value="C:membrane"/>
    <property type="evidence" value="ECO:0007669"/>
    <property type="project" value="UniProtKB-SubCell"/>
</dbReference>
<dbReference type="PROSITE" id="PS51257">
    <property type="entry name" value="PROKAR_LIPOPROTEIN"/>
    <property type="match status" value="1"/>
</dbReference>